<accession>Q3MBM3</accession>
<evidence type="ECO:0000255" key="1">
    <source>
        <dbReference type="HAMAP-Rule" id="MF_00568"/>
    </source>
</evidence>
<organism>
    <name type="scientific">Trichormus variabilis (strain ATCC 29413 / PCC 7937)</name>
    <name type="common">Anabaena variabilis</name>
    <dbReference type="NCBI Taxonomy" id="240292"/>
    <lineage>
        <taxon>Bacteria</taxon>
        <taxon>Bacillati</taxon>
        <taxon>Cyanobacteriota</taxon>
        <taxon>Cyanophyceae</taxon>
        <taxon>Nostocales</taxon>
        <taxon>Nostocaceae</taxon>
        <taxon>Trichormus</taxon>
    </lineage>
</organism>
<proteinExistence type="inferred from homology"/>
<gene>
    <name evidence="1" type="primary">nadA</name>
    <name type="ordered locus">Ava_1991</name>
</gene>
<name>NADA_TRIV2</name>
<keyword id="KW-0004">4Fe-4S</keyword>
<keyword id="KW-0963">Cytoplasm</keyword>
<keyword id="KW-0408">Iron</keyword>
<keyword id="KW-0411">Iron-sulfur</keyword>
<keyword id="KW-0479">Metal-binding</keyword>
<keyword id="KW-0662">Pyridine nucleotide biosynthesis</keyword>
<keyword id="KW-0808">Transferase</keyword>
<protein>
    <recommendedName>
        <fullName evidence="1">Quinolinate synthase</fullName>
        <ecNumber evidence="1">2.5.1.72</ecNumber>
    </recommendedName>
</protein>
<feature type="chain" id="PRO_1000072571" description="Quinolinate synthase">
    <location>
        <begin position="1"/>
        <end position="324"/>
    </location>
</feature>
<feature type="binding site" evidence="1">
    <location>
        <position position="39"/>
    </location>
    <ligand>
        <name>iminosuccinate</name>
        <dbReference type="ChEBI" id="CHEBI:77875"/>
    </ligand>
</feature>
<feature type="binding site" evidence="1">
    <location>
        <position position="56"/>
    </location>
    <ligand>
        <name>iminosuccinate</name>
        <dbReference type="ChEBI" id="CHEBI:77875"/>
    </ligand>
</feature>
<feature type="binding site" evidence="1">
    <location>
        <position position="101"/>
    </location>
    <ligand>
        <name>[4Fe-4S] cluster</name>
        <dbReference type="ChEBI" id="CHEBI:49883"/>
    </ligand>
</feature>
<feature type="binding site" evidence="1">
    <location>
        <begin position="127"/>
        <end position="129"/>
    </location>
    <ligand>
        <name>iminosuccinate</name>
        <dbReference type="ChEBI" id="CHEBI:77875"/>
    </ligand>
</feature>
<feature type="binding site" evidence="1">
    <location>
        <position position="144"/>
    </location>
    <ligand>
        <name>iminosuccinate</name>
        <dbReference type="ChEBI" id="CHEBI:77875"/>
    </ligand>
</feature>
<feature type="binding site" evidence="1">
    <location>
        <position position="187"/>
    </location>
    <ligand>
        <name>[4Fe-4S] cluster</name>
        <dbReference type="ChEBI" id="CHEBI:49883"/>
    </ligand>
</feature>
<feature type="binding site" evidence="1">
    <location>
        <begin position="213"/>
        <end position="215"/>
    </location>
    <ligand>
        <name>iminosuccinate</name>
        <dbReference type="ChEBI" id="CHEBI:77875"/>
    </ligand>
</feature>
<feature type="binding site" evidence="1">
    <location>
        <position position="230"/>
    </location>
    <ligand>
        <name>iminosuccinate</name>
        <dbReference type="ChEBI" id="CHEBI:77875"/>
    </ligand>
</feature>
<feature type="binding site" evidence="1">
    <location>
        <position position="280"/>
    </location>
    <ligand>
        <name>[4Fe-4S] cluster</name>
        <dbReference type="ChEBI" id="CHEBI:49883"/>
    </ligand>
</feature>
<dbReference type="EC" id="2.5.1.72" evidence="1"/>
<dbReference type="EMBL" id="CP000117">
    <property type="protein sequence ID" value="ABA21613.1"/>
    <property type="molecule type" value="Genomic_DNA"/>
</dbReference>
<dbReference type="SMR" id="Q3MBM3"/>
<dbReference type="STRING" id="240292.Ava_1991"/>
<dbReference type="KEGG" id="ava:Ava_1991"/>
<dbReference type="eggNOG" id="COG0379">
    <property type="taxonomic scope" value="Bacteria"/>
</dbReference>
<dbReference type="HOGENOM" id="CLU_047382_0_0_3"/>
<dbReference type="UniPathway" id="UPA00253">
    <property type="reaction ID" value="UER00327"/>
</dbReference>
<dbReference type="Proteomes" id="UP000002533">
    <property type="component" value="Chromosome"/>
</dbReference>
<dbReference type="GO" id="GO:0005829">
    <property type="term" value="C:cytosol"/>
    <property type="evidence" value="ECO:0007669"/>
    <property type="project" value="TreeGrafter"/>
</dbReference>
<dbReference type="GO" id="GO:0051539">
    <property type="term" value="F:4 iron, 4 sulfur cluster binding"/>
    <property type="evidence" value="ECO:0007669"/>
    <property type="project" value="UniProtKB-KW"/>
</dbReference>
<dbReference type="GO" id="GO:0046872">
    <property type="term" value="F:metal ion binding"/>
    <property type="evidence" value="ECO:0007669"/>
    <property type="project" value="UniProtKB-KW"/>
</dbReference>
<dbReference type="GO" id="GO:0008987">
    <property type="term" value="F:quinolinate synthetase A activity"/>
    <property type="evidence" value="ECO:0007669"/>
    <property type="project" value="UniProtKB-UniRule"/>
</dbReference>
<dbReference type="GO" id="GO:0034628">
    <property type="term" value="P:'de novo' NAD biosynthetic process from L-aspartate"/>
    <property type="evidence" value="ECO:0007669"/>
    <property type="project" value="TreeGrafter"/>
</dbReference>
<dbReference type="FunFam" id="3.40.50.10800:FF:000003">
    <property type="entry name" value="Quinolinate synthase A"/>
    <property type="match status" value="1"/>
</dbReference>
<dbReference type="Gene3D" id="3.40.50.10800">
    <property type="entry name" value="NadA-like"/>
    <property type="match status" value="3"/>
</dbReference>
<dbReference type="HAMAP" id="MF_00568">
    <property type="entry name" value="NadA_type2"/>
    <property type="match status" value="1"/>
</dbReference>
<dbReference type="InterPro" id="IPR003473">
    <property type="entry name" value="NadA"/>
</dbReference>
<dbReference type="InterPro" id="IPR036094">
    <property type="entry name" value="NadA_sf"/>
</dbReference>
<dbReference type="InterPro" id="IPR023066">
    <property type="entry name" value="Quinolinate_synth_type2"/>
</dbReference>
<dbReference type="NCBIfam" id="TIGR00550">
    <property type="entry name" value="nadA"/>
    <property type="match status" value="1"/>
</dbReference>
<dbReference type="NCBIfam" id="NF006878">
    <property type="entry name" value="PRK09375.1-2"/>
    <property type="match status" value="1"/>
</dbReference>
<dbReference type="PANTHER" id="PTHR30573:SF0">
    <property type="entry name" value="QUINOLINATE SYNTHASE, CHLOROPLASTIC"/>
    <property type="match status" value="1"/>
</dbReference>
<dbReference type="PANTHER" id="PTHR30573">
    <property type="entry name" value="QUINOLINATE SYNTHETASE A"/>
    <property type="match status" value="1"/>
</dbReference>
<dbReference type="Pfam" id="PF02445">
    <property type="entry name" value="NadA"/>
    <property type="match status" value="1"/>
</dbReference>
<dbReference type="SUPFAM" id="SSF142754">
    <property type="entry name" value="NadA-like"/>
    <property type="match status" value="1"/>
</dbReference>
<reference key="1">
    <citation type="journal article" date="2014" name="Stand. Genomic Sci.">
        <title>Complete genome sequence of Anabaena variabilis ATCC 29413.</title>
        <authorList>
            <person name="Thiel T."/>
            <person name="Pratte B.S."/>
            <person name="Zhong J."/>
            <person name="Goodwin L."/>
            <person name="Copeland A."/>
            <person name="Lucas S."/>
            <person name="Han C."/>
            <person name="Pitluck S."/>
            <person name="Land M.L."/>
            <person name="Kyrpides N.C."/>
            <person name="Woyke T."/>
        </authorList>
    </citation>
    <scope>NUCLEOTIDE SEQUENCE [LARGE SCALE GENOMIC DNA]</scope>
    <source>
        <strain>ATCC 29413 / PCC 7937</strain>
    </source>
</reference>
<comment type="function">
    <text evidence="1">Catalyzes the condensation of iminoaspartate with dihydroxyacetone phosphate to form quinolinate.</text>
</comment>
<comment type="catalytic activity">
    <reaction evidence="1">
        <text>iminosuccinate + dihydroxyacetone phosphate = quinolinate + phosphate + 2 H2O + H(+)</text>
        <dbReference type="Rhea" id="RHEA:25888"/>
        <dbReference type="ChEBI" id="CHEBI:15377"/>
        <dbReference type="ChEBI" id="CHEBI:15378"/>
        <dbReference type="ChEBI" id="CHEBI:29959"/>
        <dbReference type="ChEBI" id="CHEBI:43474"/>
        <dbReference type="ChEBI" id="CHEBI:57642"/>
        <dbReference type="ChEBI" id="CHEBI:77875"/>
        <dbReference type="EC" id="2.5.1.72"/>
    </reaction>
    <physiologicalReaction direction="left-to-right" evidence="1">
        <dbReference type="Rhea" id="RHEA:25889"/>
    </physiologicalReaction>
</comment>
<comment type="cofactor">
    <cofactor evidence="1">
        <name>[4Fe-4S] cluster</name>
        <dbReference type="ChEBI" id="CHEBI:49883"/>
    </cofactor>
    <text evidence="1">Binds 1 [4Fe-4S] cluster per subunit.</text>
</comment>
<comment type="pathway">
    <text evidence="1">Cofactor biosynthesis; NAD(+) biosynthesis; quinolinate from iminoaspartate: step 1/1.</text>
</comment>
<comment type="subcellular location">
    <subcellularLocation>
        <location evidence="1">Cytoplasm</location>
    </subcellularLocation>
</comment>
<comment type="similarity">
    <text evidence="1">Belongs to the quinolinate synthase family. Type 2 subfamily.</text>
</comment>
<sequence length="324" mass="35887">MFTTAFAQREQTQPGGLPLDLFAAIDSLKKELNAVILAHYYQEPDIQDIADFIGDSLQLARAAAKTNADVIVFAGVHFMAETAKILNPEKLVLLPDLNAGCSLADSCPPKEFAAFKAAHPDHLVVSYINCSAEIKAMSDIICTSSNAVKIVQQIPKEQPIIFAPDRNLGRYVMEQTGRDLVLWQGSCLVHETFSEKKIVQLKVAHPQAEAIAHPECESSVLRHASFIGSTAALLQYCQTSPSQEFIVATEPGIIHQMQKLAPNKHFIPAPPINNCACNECPFMRLNTLEKLYWAMKNRTPEITMSEDIRIAALRPMQRMLEMSN</sequence>